<sequence length="116" mass="13307">MRHQCRVPKLGRPTDQRKAMLRGLTTQLIREGRVTTTKARAKALRDEAERMITLAKNGSLASRRRAIGYIYDKQLVHALFDKAQDRYGDRQGGYTRIIRTVPRRGDNAEMAIIELV</sequence>
<reference key="1">
    <citation type="journal article" date="2007" name="PLoS Genet.">
        <title>Patterns and implications of gene gain and loss in the evolution of Prochlorococcus.</title>
        <authorList>
            <person name="Kettler G.C."/>
            <person name="Martiny A.C."/>
            <person name="Huang K."/>
            <person name="Zucker J."/>
            <person name="Coleman M.L."/>
            <person name="Rodrigue S."/>
            <person name="Chen F."/>
            <person name="Lapidus A."/>
            <person name="Ferriera S."/>
            <person name="Johnson J."/>
            <person name="Steglich C."/>
            <person name="Church G.M."/>
            <person name="Richardson P."/>
            <person name="Chisholm S.W."/>
        </authorList>
    </citation>
    <scope>NUCLEOTIDE SEQUENCE [LARGE SCALE GENOMIC DNA]</scope>
    <source>
        <strain>MIT 9303</strain>
    </source>
</reference>
<gene>
    <name evidence="1" type="primary">rplQ</name>
    <name evidence="1" type="synonym">rpl17</name>
    <name type="ordered locus">P9303_23271</name>
</gene>
<organism>
    <name type="scientific">Prochlorococcus marinus (strain MIT 9303)</name>
    <dbReference type="NCBI Taxonomy" id="59922"/>
    <lineage>
        <taxon>Bacteria</taxon>
        <taxon>Bacillati</taxon>
        <taxon>Cyanobacteriota</taxon>
        <taxon>Cyanophyceae</taxon>
        <taxon>Synechococcales</taxon>
        <taxon>Prochlorococcaceae</taxon>
        <taxon>Prochlorococcus</taxon>
    </lineage>
</organism>
<comment type="subunit">
    <text evidence="1">Part of the 50S ribosomal subunit. Contacts protein L32.</text>
</comment>
<comment type="similarity">
    <text evidence="1">Belongs to the bacterial ribosomal protein bL17 family.</text>
</comment>
<name>RL17_PROM3</name>
<protein>
    <recommendedName>
        <fullName evidence="1">Large ribosomal subunit protein bL17</fullName>
    </recommendedName>
    <alternativeName>
        <fullName evidence="2">50S ribosomal protein L17</fullName>
    </alternativeName>
</protein>
<proteinExistence type="inferred from homology"/>
<accession>A2CC52</accession>
<dbReference type="EMBL" id="CP000554">
    <property type="protein sequence ID" value="ABM79062.1"/>
    <property type="molecule type" value="Genomic_DNA"/>
</dbReference>
<dbReference type="RefSeq" id="WP_011131123.1">
    <property type="nucleotide sequence ID" value="NC_008820.1"/>
</dbReference>
<dbReference type="SMR" id="A2CC52"/>
<dbReference type="STRING" id="59922.P9303_23271"/>
<dbReference type="KEGG" id="pmf:P9303_23271"/>
<dbReference type="HOGENOM" id="CLU_074407_2_2_3"/>
<dbReference type="BioCyc" id="PMAR59922:G1G80-2043-MONOMER"/>
<dbReference type="Proteomes" id="UP000002274">
    <property type="component" value="Chromosome"/>
</dbReference>
<dbReference type="GO" id="GO:0022625">
    <property type="term" value="C:cytosolic large ribosomal subunit"/>
    <property type="evidence" value="ECO:0007669"/>
    <property type="project" value="TreeGrafter"/>
</dbReference>
<dbReference type="GO" id="GO:0003735">
    <property type="term" value="F:structural constituent of ribosome"/>
    <property type="evidence" value="ECO:0007669"/>
    <property type="project" value="InterPro"/>
</dbReference>
<dbReference type="GO" id="GO:0006412">
    <property type="term" value="P:translation"/>
    <property type="evidence" value="ECO:0007669"/>
    <property type="project" value="UniProtKB-UniRule"/>
</dbReference>
<dbReference type="FunFam" id="3.90.1030.10:FF:000001">
    <property type="entry name" value="50S ribosomal protein L17"/>
    <property type="match status" value="1"/>
</dbReference>
<dbReference type="Gene3D" id="3.90.1030.10">
    <property type="entry name" value="Ribosomal protein L17"/>
    <property type="match status" value="1"/>
</dbReference>
<dbReference type="HAMAP" id="MF_01368">
    <property type="entry name" value="Ribosomal_bL17"/>
    <property type="match status" value="1"/>
</dbReference>
<dbReference type="InterPro" id="IPR000456">
    <property type="entry name" value="Ribosomal_bL17"/>
</dbReference>
<dbReference type="InterPro" id="IPR036373">
    <property type="entry name" value="Ribosomal_bL17_sf"/>
</dbReference>
<dbReference type="NCBIfam" id="TIGR00059">
    <property type="entry name" value="L17"/>
    <property type="match status" value="1"/>
</dbReference>
<dbReference type="PANTHER" id="PTHR14413:SF16">
    <property type="entry name" value="LARGE RIBOSOMAL SUBUNIT PROTEIN BL17M"/>
    <property type="match status" value="1"/>
</dbReference>
<dbReference type="PANTHER" id="PTHR14413">
    <property type="entry name" value="RIBOSOMAL PROTEIN L17"/>
    <property type="match status" value="1"/>
</dbReference>
<dbReference type="Pfam" id="PF01196">
    <property type="entry name" value="Ribosomal_L17"/>
    <property type="match status" value="1"/>
</dbReference>
<dbReference type="SUPFAM" id="SSF64263">
    <property type="entry name" value="Prokaryotic ribosomal protein L17"/>
    <property type="match status" value="1"/>
</dbReference>
<keyword id="KW-0687">Ribonucleoprotein</keyword>
<keyword id="KW-0689">Ribosomal protein</keyword>
<evidence type="ECO:0000255" key="1">
    <source>
        <dbReference type="HAMAP-Rule" id="MF_01368"/>
    </source>
</evidence>
<evidence type="ECO:0000305" key="2"/>
<feature type="chain" id="PRO_1000055909" description="Large ribosomal subunit protein bL17">
    <location>
        <begin position="1"/>
        <end position="116"/>
    </location>
</feature>